<comment type="similarity">
    <text evidence="1">Belongs to the universal ribosomal protein uS2 family.</text>
</comment>
<dbReference type="EMBL" id="CU207366">
    <property type="protein sequence ID" value="CAL65123.1"/>
    <property type="molecule type" value="Genomic_DNA"/>
</dbReference>
<dbReference type="RefSeq" id="WP_011708061.1">
    <property type="nucleotide sequence ID" value="NC_008571.1"/>
</dbReference>
<dbReference type="SMR" id="A0LXM8"/>
<dbReference type="STRING" id="411154.GFO_0134"/>
<dbReference type="KEGG" id="gfo:GFO_0134"/>
<dbReference type="eggNOG" id="COG0052">
    <property type="taxonomic scope" value="Bacteria"/>
</dbReference>
<dbReference type="HOGENOM" id="CLU_040318_0_2_10"/>
<dbReference type="OrthoDB" id="9808036at2"/>
<dbReference type="Proteomes" id="UP000000755">
    <property type="component" value="Chromosome"/>
</dbReference>
<dbReference type="GO" id="GO:0022627">
    <property type="term" value="C:cytosolic small ribosomal subunit"/>
    <property type="evidence" value="ECO:0007669"/>
    <property type="project" value="TreeGrafter"/>
</dbReference>
<dbReference type="GO" id="GO:0003735">
    <property type="term" value="F:structural constituent of ribosome"/>
    <property type="evidence" value="ECO:0007669"/>
    <property type="project" value="InterPro"/>
</dbReference>
<dbReference type="GO" id="GO:0006412">
    <property type="term" value="P:translation"/>
    <property type="evidence" value="ECO:0007669"/>
    <property type="project" value="UniProtKB-UniRule"/>
</dbReference>
<dbReference type="CDD" id="cd01425">
    <property type="entry name" value="RPS2"/>
    <property type="match status" value="1"/>
</dbReference>
<dbReference type="FunFam" id="1.10.287.610:FF:000001">
    <property type="entry name" value="30S ribosomal protein S2"/>
    <property type="match status" value="1"/>
</dbReference>
<dbReference type="Gene3D" id="3.40.50.10490">
    <property type="entry name" value="Glucose-6-phosphate isomerase like protein, domain 1"/>
    <property type="match status" value="1"/>
</dbReference>
<dbReference type="Gene3D" id="1.10.287.610">
    <property type="entry name" value="Helix hairpin bin"/>
    <property type="match status" value="1"/>
</dbReference>
<dbReference type="HAMAP" id="MF_00291_B">
    <property type="entry name" value="Ribosomal_uS2_B"/>
    <property type="match status" value="1"/>
</dbReference>
<dbReference type="InterPro" id="IPR001865">
    <property type="entry name" value="Ribosomal_uS2"/>
</dbReference>
<dbReference type="InterPro" id="IPR005706">
    <property type="entry name" value="Ribosomal_uS2_bac/mit/plastid"/>
</dbReference>
<dbReference type="InterPro" id="IPR018130">
    <property type="entry name" value="Ribosomal_uS2_CS"/>
</dbReference>
<dbReference type="InterPro" id="IPR023591">
    <property type="entry name" value="Ribosomal_uS2_flav_dom_sf"/>
</dbReference>
<dbReference type="NCBIfam" id="TIGR01011">
    <property type="entry name" value="rpsB_bact"/>
    <property type="match status" value="1"/>
</dbReference>
<dbReference type="PANTHER" id="PTHR12534">
    <property type="entry name" value="30S RIBOSOMAL PROTEIN S2 PROKARYOTIC AND ORGANELLAR"/>
    <property type="match status" value="1"/>
</dbReference>
<dbReference type="PANTHER" id="PTHR12534:SF0">
    <property type="entry name" value="SMALL RIBOSOMAL SUBUNIT PROTEIN US2M"/>
    <property type="match status" value="1"/>
</dbReference>
<dbReference type="Pfam" id="PF00318">
    <property type="entry name" value="Ribosomal_S2"/>
    <property type="match status" value="1"/>
</dbReference>
<dbReference type="PRINTS" id="PR00395">
    <property type="entry name" value="RIBOSOMALS2"/>
</dbReference>
<dbReference type="SUPFAM" id="SSF52313">
    <property type="entry name" value="Ribosomal protein S2"/>
    <property type="match status" value="1"/>
</dbReference>
<dbReference type="PROSITE" id="PS00962">
    <property type="entry name" value="RIBOSOMAL_S2_1"/>
    <property type="match status" value="1"/>
</dbReference>
<dbReference type="PROSITE" id="PS00963">
    <property type="entry name" value="RIBOSOMAL_S2_2"/>
    <property type="match status" value="1"/>
</dbReference>
<feature type="chain" id="PRO_1000003970" description="Small ribosomal subunit protein uS2">
    <location>
        <begin position="1"/>
        <end position="299"/>
    </location>
</feature>
<feature type="region of interest" description="Disordered" evidence="2">
    <location>
        <begin position="227"/>
        <end position="299"/>
    </location>
</feature>
<organism>
    <name type="scientific">Christiangramia forsetii (strain DSM 17595 / CGMCC 1.15422 / KT0803)</name>
    <name type="common">Gramella forsetii</name>
    <dbReference type="NCBI Taxonomy" id="411154"/>
    <lineage>
        <taxon>Bacteria</taxon>
        <taxon>Pseudomonadati</taxon>
        <taxon>Bacteroidota</taxon>
        <taxon>Flavobacteriia</taxon>
        <taxon>Flavobacteriales</taxon>
        <taxon>Flavobacteriaceae</taxon>
        <taxon>Christiangramia</taxon>
    </lineage>
</organism>
<evidence type="ECO:0000255" key="1">
    <source>
        <dbReference type="HAMAP-Rule" id="MF_00291"/>
    </source>
</evidence>
<evidence type="ECO:0000256" key="2">
    <source>
        <dbReference type="SAM" id="MobiDB-lite"/>
    </source>
</evidence>
<evidence type="ECO:0000305" key="3"/>
<name>RS2_CHRFK</name>
<protein>
    <recommendedName>
        <fullName evidence="1">Small ribosomal subunit protein uS2</fullName>
    </recommendedName>
    <alternativeName>
        <fullName evidence="3">30S ribosomal protein S2</fullName>
    </alternativeName>
</protein>
<proteinExistence type="inferred from homology"/>
<accession>A0LXM8</accession>
<reference key="1">
    <citation type="journal article" date="2006" name="Environ. Microbiol.">
        <title>Whole genome analysis of the marine Bacteroidetes'Gramella forsetii' reveals adaptations to degradation of polymeric organic matter.</title>
        <authorList>
            <person name="Bauer M."/>
            <person name="Kube M."/>
            <person name="Teeling H."/>
            <person name="Richter M."/>
            <person name="Lombardot T."/>
            <person name="Allers E."/>
            <person name="Wuerdemann C.A."/>
            <person name="Quast C."/>
            <person name="Kuhl H."/>
            <person name="Knaust F."/>
            <person name="Woebken D."/>
            <person name="Bischof K."/>
            <person name="Mussmann M."/>
            <person name="Choudhuri J.V."/>
            <person name="Meyer F."/>
            <person name="Reinhardt R."/>
            <person name="Amann R.I."/>
            <person name="Gloeckner F.O."/>
        </authorList>
    </citation>
    <scope>NUCLEOTIDE SEQUENCE [LARGE SCALE GENOMIC DNA]</scope>
    <source>
        <strain>DSM 17595 / CGMCC 1.15422 / KT0803</strain>
    </source>
</reference>
<keyword id="KW-0687">Ribonucleoprotein</keyword>
<keyword id="KW-0689">Ribosomal protein</keyword>
<sequence>MANKVDVKELLDAGVHFGHLTRRWNPNMAPYIYMERNGIHIINLYKSAAKMQEAGDALAKIAASGRKILFVATKKQAKEIVAEQAEKANMPYITERWPGGMLTNFVTIRKAVKKMASIDRMKKDGTFNSLSKKERLQVDRLRAKLEKNLGSISDMSRLPAALFVVDTTREHIAIKEAHKLNIPIFAMVDTNSDPREVDYLIPSNDDASKSISKVVSYVADSIVEGLSERKSEKSTKKKEEKASKEEKSDKAPKEKKEKKAEVPSKDAEDKKAMKEAKNDVKLESKSETLDKAKASNEEE</sequence>
<gene>
    <name evidence="1" type="primary">rpsB</name>
    <name type="ordered locus">GFO_0134</name>
</gene>